<reference key="1">
    <citation type="journal article" date="2000" name="Nature">
        <title>Genome sequence of the endocellular bacterial symbiont of aphids Buchnera sp. APS.</title>
        <authorList>
            <person name="Shigenobu S."/>
            <person name="Watanabe H."/>
            <person name="Hattori M."/>
            <person name="Sakaki Y."/>
            <person name="Ishikawa H."/>
        </authorList>
    </citation>
    <scope>NUCLEOTIDE SEQUENCE [LARGE SCALE GENOMIC DNA]</scope>
    <source>
        <strain>APS</strain>
    </source>
</reference>
<protein>
    <recommendedName>
        <fullName>Exodeoxyribonuclease I</fullName>
        <shortName>ExoI</shortName>
        <shortName>Exonuclease I</shortName>
        <ecNumber evidence="1">3.1.11.1</ecNumber>
    </recommendedName>
    <alternativeName>
        <fullName>DNA deoxyribophosphodiesterase</fullName>
        <shortName>dRPase</shortName>
    </alternativeName>
</protein>
<comment type="function">
    <text evidence="1">Degrades single-stranded DNA (ssDNA) in a highly processive manner. Also functions as a DNA deoxyribophosphodiesterase that releases deoxyribose-phosphate moieties following the cleavage of DNA at an apurinic/apyrimidinic (AP) site by either an AP endonuclease or AP lyase.</text>
</comment>
<comment type="catalytic activity">
    <reaction evidence="1">
        <text>Exonucleolytic cleavage in the 3'- to 5'-direction to yield nucleoside 5'-phosphates.</text>
        <dbReference type="EC" id="3.1.11.1"/>
    </reaction>
</comment>
<comment type="cofactor">
    <cofactor evidence="1">
        <name>Mg(2+)</name>
        <dbReference type="ChEBI" id="CHEBI:18420"/>
    </cofactor>
    <text evidence="1">Binds 2 Mg(2+) ions per monomer.</text>
</comment>
<comment type="subunit">
    <text evidence="1">Monomer. Interacts with ssb (via C-terminus); this interaction stimulates the exonuclease activity by recruiting the enzyme to its substrate.</text>
</comment>
<comment type="domain">
    <text evidence="1">The N-terminal exonuclease domain and the exonuclease C-terminal domain form a central positively charged groove which binds the DNA.</text>
</comment>
<organism>
    <name type="scientific">Buchnera aphidicola subsp. Acyrthosiphon pisum (strain APS)</name>
    <name type="common">Acyrthosiphon pisum symbiotic bacterium</name>
    <dbReference type="NCBI Taxonomy" id="107806"/>
    <lineage>
        <taxon>Bacteria</taxon>
        <taxon>Pseudomonadati</taxon>
        <taxon>Pseudomonadota</taxon>
        <taxon>Gammaproteobacteria</taxon>
        <taxon>Enterobacterales</taxon>
        <taxon>Erwiniaceae</taxon>
        <taxon>Buchnera</taxon>
    </lineage>
</organism>
<sequence>MIQFQKKTPNFLFYDYETFGIHTALDKPAQFACIRTDINLNIIDDPQYFYCFPSDDYLPDPGSVLITHITPQYTEKNGTNEYNFSQKIYDILMQSNTCVVGYNNINFDDEITRNIFYRNFFDPYEWSWKNGNSRWDILNLLRACYALRPTGINWPKNELGLTSFKLSDLTKTNNIVHLNAHNAVSDVYATIEIAKLVKKKQPRLFDFFFKIRKKNELYKLIDLRNFQPIIYISAYFGAIYHNMSCILPIAWHENNSNILIAIDLFKDIKTLINMCKKICFDSIFIKNLLDSGVVLLHLNRCPILAPIQVIRKEDYNRLNFHRFSLNKKIELIKKNMFFIQNIKIIFSKNNNTNQFFNVDLEIYNGFFNSKDKKKIQIIRNTDPVFLKHIFCNFHDSRLKNLFFRYRARNFFIH</sequence>
<proteinExistence type="inferred from homology"/>
<feature type="chain" id="PRO_0000087107" description="Exodeoxyribonuclease I">
    <location>
        <begin position="1"/>
        <end position="413"/>
    </location>
</feature>
<feature type="domain" description="Exonuclease" evidence="2">
    <location>
        <begin position="12"/>
        <end position="193"/>
    </location>
</feature>
<feature type="domain" description="ExoI SH3-like" evidence="3">
    <location>
        <begin position="202"/>
        <end position="349"/>
    </location>
</feature>
<feature type="domain" description="ExoI C-terminal" evidence="4">
    <location>
        <begin position="350"/>
        <end position="413"/>
    </location>
</feature>
<feature type="binding site" evidence="1">
    <location>
        <position position="15"/>
    </location>
    <ligand>
        <name>Mg(2+)</name>
        <dbReference type="ChEBI" id="CHEBI:18420"/>
        <label>1</label>
    </ligand>
</feature>
<feature type="binding site" evidence="1">
    <location>
        <position position="17"/>
    </location>
    <ligand>
        <name>Mg(2+)</name>
        <dbReference type="ChEBI" id="CHEBI:18420"/>
        <label>2</label>
    </ligand>
</feature>
<feature type="binding site" evidence="1">
    <location>
        <position position="17"/>
    </location>
    <ligand>
        <name>substrate</name>
    </ligand>
</feature>
<feature type="binding site" evidence="1">
    <location>
        <position position="186"/>
    </location>
    <ligand>
        <name>Mg(2+)</name>
        <dbReference type="ChEBI" id="CHEBI:18420"/>
        <label>2</label>
    </ligand>
</feature>
<feature type="site" description="Interaction with single-stranded DNA" evidence="1">
    <location>
        <position position="113"/>
    </location>
</feature>
<feature type="site" description="Interaction with single-stranded DNA" evidence="1">
    <location>
        <position position="124"/>
    </location>
</feature>
<feature type="site" description="Interaction with single-stranded DNA" evidence="1">
    <location>
        <position position="128"/>
    </location>
</feature>
<feature type="site" description="Interaction with single-stranded DNA" evidence="1">
    <location>
        <position position="142"/>
    </location>
</feature>
<feature type="site" description="Important for interaction with ssb" evidence="1">
    <location>
        <position position="148"/>
    </location>
</feature>
<feature type="site" description="Important for activity" evidence="1">
    <location>
        <position position="181"/>
    </location>
</feature>
<feature type="site" description="Interaction with single-stranded DNA" evidence="1">
    <location>
        <position position="214"/>
    </location>
</feature>
<feature type="site" description="Interaction with single-stranded DNA" evidence="1">
    <location>
        <position position="257"/>
    </location>
</feature>
<feature type="site" description="Interaction with single-stranded DNA" evidence="1">
    <location>
        <position position="299"/>
    </location>
</feature>
<feature type="site" description="Interaction with single-stranded DNA" evidence="1">
    <location>
        <position position="363"/>
    </location>
</feature>
<feature type="site" description="Interaction with single-stranded DNA" evidence="1">
    <location>
        <position position="366"/>
    </location>
</feature>
<name>EX1_BUCAI</name>
<accession>P57620</accession>
<gene>
    <name type="primary">sbcB</name>
    <name type="ordered locus">BU555</name>
</gene>
<evidence type="ECO:0000250" key="1">
    <source>
        <dbReference type="UniProtKB" id="P04995"/>
    </source>
</evidence>
<evidence type="ECO:0000255" key="2"/>
<evidence type="ECO:0000255" key="3">
    <source>
        <dbReference type="PROSITE-ProRule" id="PRU01120"/>
    </source>
</evidence>
<evidence type="ECO:0000255" key="4">
    <source>
        <dbReference type="PROSITE-ProRule" id="PRU01121"/>
    </source>
</evidence>
<keyword id="KW-0227">DNA damage</keyword>
<keyword id="KW-0234">DNA repair</keyword>
<keyword id="KW-0238">DNA-binding</keyword>
<keyword id="KW-0269">Exonuclease</keyword>
<keyword id="KW-0378">Hydrolase</keyword>
<keyword id="KW-0460">Magnesium</keyword>
<keyword id="KW-0479">Metal-binding</keyword>
<keyword id="KW-0540">Nuclease</keyword>
<keyword id="KW-1185">Reference proteome</keyword>
<dbReference type="EC" id="3.1.11.1" evidence="1"/>
<dbReference type="EMBL" id="BA000003">
    <property type="protein sequence ID" value="BAB13247.1"/>
    <property type="molecule type" value="Genomic_DNA"/>
</dbReference>
<dbReference type="RefSeq" id="NP_240361.1">
    <property type="nucleotide sequence ID" value="NC_002528.1"/>
</dbReference>
<dbReference type="SMR" id="P57620"/>
<dbReference type="EnsemblBacteria" id="BAB13247">
    <property type="protein sequence ID" value="BAB13247"/>
    <property type="gene ID" value="BAB13247"/>
</dbReference>
<dbReference type="KEGG" id="buc:BU555"/>
<dbReference type="PATRIC" id="fig|107806.10.peg.560"/>
<dbReference type="eggNOG" id="COG2925">
    <property type="taxonomic scope" value="Bacteria"/>
</dbReference>
<dbReference type="HOGENOM" id="CLU_043508_0_0_6"/>
<dbReference type="Proteomes" id="UP000001806">
    <property type="component" value="Chromosome"/>
</dbReference>
<dbReference type="GO" id="GO:0000175">
    <property type="term" value="F:3'-5'-RNA exonuclease activity"/>
    <property type="evidence" value="ECO:0007669"/>
    <property type="project" value="InterPro"/>
</dbReference>
<dbReference type="GO" id="GO:0051575">
    <property type="term" value="F:5'-deoxyribose-5-phosphate lyase activity"/>
    <property type="evidence" value="ECO:0000250"/>
    <property type="project" value="UniProtKB"/>
</dbReference>
<dbReference type="GO" id="GO:0000287">
    <property type="term" value="F:magnesium ion binding"/>
    <property type="evidence" value="ECO:0000250"/>
    <property type="project" value="UniProtKB"/>
</dbReference>
<dbReference type="GO" id="GO:0008310">
    <property type="term" value="F:single-stranded DNA 3'-5' DNA exonuclease activity"/>
    <property type="evidence" value="ECO:0000250"/>
    <property type="project" value="UniProtKB"/>
</dbReference>
<dbReference type="GO" id="GO:0003697">
    <property type="term" value="F:single-stranded DNA binding"/>
    <property type="evidence" value="ECO:0000250"/>
    <property type="project" value="UniProtKB"/>
</dbReference>
<dbReference type="GO" id="GO:0006308">
    <property type="term" value="P:DNA catabolic process"/>
    <property type="evidence" value="ECO:0000250"/>
    <property type="project" value="UniProtKB"/>
</dbReference>
<dbReference type="GO" id="GO:0006281">
    <property type="term" value="P:DNA repair"/>
    <property type="evidence" value="ECO:0007669"/>
    <property type="project" value="UniProtKB-KW"/>
</dbReference>
<dbReference type="CDD" id="cd06138">
    <property type="entry name" value="ExoI_N"/>
    <property type="match status" value="1"/>
</dbReference>
<dbReference type="FunFam" id="1.20.1280.70:FF:000001">
    <property type="entry name" value="Exodeoxyribonuclease I"/>
    <property type="match status" value="1"/>
</dbReference>
<dbReference type="FunFam" id="3.30.1520.20:FF:000001">
    <property type="entry name" value="Exodeoxyribonuclease I"/>
    <property type="match status" value="1"/>
</dbReference>
<dbReference type="FunFam" id="3.30.420.10:FF:000033">
    <property type="entry name" value="Exodeoxyribonuclease I"/>
    <property type="match status" value="1"/>
</dbReference>
<dbReference type="Gene3D" id="3.30.1520.20">
    <property type="entry name" value="Exonuclease ExoI, domain 2"/>
    <property type="match status" value="1"/>
</dbReference>
<dbReference type="Gene3D" id="1.20.1280.70">
    <property type="entry name" value="Exonuclease ExoI, domain 3"/>
    <property type="match status" value="1"/>
</dbReference>
<dbReference type="Gene3D" id="3.30.420.10">
    <property type="entry name" value="Ribonuclease H-like superfamily/Ribonuclease H"/>
    <property type="match status" value="1"/>
</dbReference>
<dbReference type="InterPro" id="IPR034748">
    <property type="entry name" value="EXOI_C"/>
</dbReference>
<dbReference type="InterPro" id="IPR034747">
    <property type="entry name" value="EXOI_SH3"/>
</dbReference>
<dbReference type="InterPro" id="IPR038649">
    <property type="entry name" value="EXOI_SH3_sf"/>
</dbReference>
<dbReference type="InterPro" id="IPR013620">
    <property type="entry name" value="Exonuc_1_C"/>
</dbReference>
<dbReference type="InterPro" id="IPR013520">
    <property type="entry name" value="Exonuclease_RNaseT/DNA_pol3"/>
</dbReference>
<dbReference type="InterPro" id="IPR022894">
    <property type="entry name" value="Oligoribonuclease"/>
</dbReference>
<dbReference type="InterPro" id="IPR012337">
    <property type="entry name" value="RNaseH-like_sf"/>
</dbReference>
<dbReference type="InterPro" id="IPR036397">
    <property type="entry name" value="RNaseH_sf"/>
</dbReference>
<dbReference type="NCBIfam" id="NF008746">
    <property type="entry name" value="PRK11779.1"/>
    <property type="match status" value="1"/>
</dbReference>
<dbReference type="PANTHER" id="PTHR11046:SF11">
    <property type="entry name" value="EXODEOXYRIBONUCLEASE I"/>
    <property type="match status" value="1"/>
</dbReference>
<dbReference type="PANTHER" id="PTHR11046">
    <property type="entry name" value="OLIGORIBONUCLEASE, MITOCHONDRIAL"/>
    <property type="match status" value="1"/>
</dbReference>
<dbReference type="Pfam" id="PF08411">
    <property type="entry name" value="Exonuc_X-T_C"/>
    <property type="match status" value="1"/>
</dbReference>
<dbReference type="Pfam" id="PF00929">
    <property type="entry name" value="RNase_T"/>
    <property type="match status" value="1"/>
</dbReference>
<dbReference type="SMART" id="SM00479">
    <property type="entry name" value="EXOIII"/>
    <property type="match status" value="1"/>
</dbReference>
<dbReference type="SUPFAM" id="SSF53098">
    <property type="entry name" value="Ribonuclease H-like"/>
    <property type="match status" value="1"/>
</dbReference>
<dbReference type="PROSITE" id="PS51785">
    <property type="entry name" value="EXOI_C"/>
    <property type="match status" value="1"/>
</dbReference>
<dbReference type="PROSITE" id="PS51784">
    <property type="entry name" value="EXOI_SH3"/>
    <property type="match status" value="1"/>
</dbReference>